<feature type="chain" id="PRO_0000416953" description="CRISPR-associated nuclease/helicase Cas3">
    <location>
        <begin position="1"/>
        <end position="830"/>
    </location>
</feature>
<feature type="domain" description="HD Cas3-type" evidence="5">
    <location>
        <begin position="15"/>
        <end position="250"/>
    </location>
</feature>
<feature type="domain" description="Helicase ATP-binding" evidence="3">
    <location>
        <begin position="286"/>
        <end position="471"/>
    </location>
</feature>
<feature type="domain" description="Helicase C-terminal" evidence="4">
    <location>
        <begin position="503"/>
        <end position="660"/>
    </location>
</feature>
<feature type="binding site" evidence="1">
    <location>
        <position position="67"/>
    </location>
    <ligand>
        <name>Mg(2+)</name>
        <dbReference type="ChEBI" id="CHEBI:18420"/>
    </ligand>
</feature>
<feature type="binding site" evidence="2">
    <location>
        <position position="135"/>
    </location>
    <ligand>
        <name>Mg(2+)</name>
        <dbReference type="ChEBI" id="CHEBI:18420"/>
    </ligand>
</feature>
<feature type="binding site" evidence="3">
    <location>
        <begin position="299"/>
        <end position="306"/>
    </location>
    <ligand>
        <name>ATP</name>
        <dbReference type="ChEBI" id="CHEBI:30616"/>
    </ligand>
</feature>
<feature type="mutagenesis site" description="Loss of R-loop unwinding." evidence="6">
    <original>D</original>
    <variation>A</variation>
    <location>
        <position position="347"/>
    </location>
</feature>
<reference key="1">
    <citation type="journal article" date="1997" name="J. Bacteriol.">
        <title>Complete genome sequence of Methanobacterium thermoautotrophicum deltaH: functional analysis and comparative genomics.</title>
        <authorList>
            <person name="Smith D.R."/>
            <person name="Doucette-Stamm L.A."/>
            <person name="Deloughery C."/>
            <person name="Lee H.-M."/>
            <person name="Dubois J."/>
            <person name="Aldredge T."/>
            <person name="Bashirzadeh R."/>
            <person name="Blakely D."/>
            <person name="Cook R."/>
            <person name="Gilbert K."/>
            <person name="Harrison D."/>
            <person name="Hoang L."/>
            <person name="Keagle P."/>
            <person name="Lumm W."/>
            <person name="Pothier B."/>
            <person name="Qiu D."/>
            <person name="Spadafora R."/>
            <person name="Vicare R."/>
            <person name="Wang Y."/>
            <person name="Wierzbowski J."/>
            <person name="Gibson R."/>
            <person name="Jiwani N."/>
            <person name="Caruso A."/>
            <person name="Bush D."/>
            <person name="Safer H."/>
            <person name="Patwell D."/>
            <person name="Prabhakar S."/>
            <person name="McDougall S."/>
            <person name="Shimer G."/>
            <person name="Goyal A."/>
            <person name="Pietrovski S."/>
            <person name="Church G.M."/>
            <person name="Daniels C.J."/>
            <person name="Mao J.-I."/>
            <person name="Rice P."/>
            <person name="Noelling J."/>
            <person name="Reeve J.N."/>
        </authorList>
    </citation>
    <scope>NUCLEOTIDE SEQUENCE [LARGE SCALE GENOMIC DNA]</scope>
    <source>
        <strain>ATCC 29096 / DSM 1053 / JCM 10044 / NBRC 100330 / Delta H</strain>
    </source>
</reference>
<reference key="2">
    <citation type="journal article" date="2011" name="Biochem. J.">
        <title>Helicase dissociation and annealing of RNA-DNA hybrids by Escherichia coli Cas3 protein.</title>
        <authorList>
            <person name="Howard J.A."/>
            <person name="Delmas S."/>
            <person name="Ivancic-Bace I."/>
            <person name="Bolt E.L."/>
        </authorList>
    </citation>
    <scope>FUNCTION AS A HELICASE</scope>
    <scope>FUNCTION IN FORMING R-LOOPS</scope>
    <scope>MUTAGENESIS OF ASP-347</scope>
    <source>
        <strain>ATCC 29096 / DSM 1053 / JCM 10044 / NBRC 100330 / Delta H</strain>
    </source>
</reference>
<evidence type="ECO:0000250" key="1"/>
<evidence type="ECO:0000255" key="2"/>
<evidence type="ECO:0000255" key="3">
    <source>
        <dbReference type="PROSITE-ProRule" id="PRU00541"/>
    </source>
</evidence>
<evidence type="ECO:0000255" key="4">
    <source>
        <dbReference type="PROSITE-ProRule" id="PRU00542"/>
    </source>
</evidence>
<evidence type="ECO:0000255" key="5">
    <source>
        <dbReference type="PROSITE-ProRule" id="PRU00974"/>
    </source>
</evidence>
<evidence type="ECO:0000269" key="6">
    <source>
    </source>
</evidence>
<evidence type="ECO:0000305" key="7"/>
<protein>
    <recommendedName>
        <fullName>CRISPR-associated nuclease/helicase Cas3</fullName>
        <ecNumber>3.1.-.-</ecNumber>
        <ecNumber>3.6.4.-</ecNumber>
    </recommendedName>
</protein>
<proteinExistence type="evidence at protein level"/>
<sequence length="830" mass="96329">MAMMELIDIIRAKSNDQRNYLLKDHLKETVARIDDFHNFYQTNREKFSYKIGEKTFRALAMASIIHDLGKIDYNFQKKLMGDDSEAWEVLEEFLSPLKPLKRSPRHEILSIIWSTFLLGNDDLDAMMRTAILLHHYNEYFLNDKDLMEIIFTYRDAFEIYLNFIIEKKETLRIFIEDILNYIQNSLESDLVISAADEIRSNMDFEKPELLLEKIKEYDDDISEFAAFYEPEERSADILILSGILRRADYSASAGVDIELFSEEVFRDIDEKITSKIGGAPWQIRLMGELGGPKKMVLVAPTGSGKTEFSILWAAKHGRKFIYTLPLRVALNDIFMRLRDSDGYFSEDEIDILHSTAFIEYLKEERLGRGTDLDSMMTSARLMASPALLTTPDQVLITSLNYFGSDKVISVYPFASMILDEIQTYNEEMAAVIIKTLELVNEVDGNILVMTATLPPYFRSFLDAMNFEVMDVAAIPGAHDIKNLNLKRHVPQLIEEPLFNDELEVSDKLGKILDENSEKNVLIVVNNVQKAIELYREYQDDPDVYLLHSRLLEKVKSQRIGEVKKRSQDERGLTVISTQIIEASVDIDFDLMITEISTIDSQIQRWGRIHRNRDADYDSGDPNIIIFTDSDRRTSLIYDKKVLDATRAILERYDGQILDYNLERSMIEEVFQEEIDGSTLKEIYENQIRETISDLDYFTVEKRTQAQRLFRNMAGYKVFIPDAVLRYSESEIERTFAELIKGDYRLWKDILGEIERITGEKTTMWDLKKVLYEYSVNVPVFYEEKSDFWSRTTGEFKGFYVWGSMEDDDVELLEELGLDSIFGETESSLIV</sequence>
<comment type="function">
    <text evidence="6">CRISPR (clustered regularly interspaced short palindromic repeat), is an adaptive immune system that provides protection against mobile genetic elements (viruses, transposable elements and conjugative plasmids). CRISPR clusters contain sequences complementary to antecedent mobile elements and target invading nucleic acids. CRISPR clusters are transcribed and processed into CRISPR RNA (crRNA). Cas3 plus Cascade participate in CRISPR interference, the third stage of CRISPR immunity. Anneals and unwinds R-loops (in which crRNA binds the target DNA, displacing the noncomplementary strand). Unwinding requires ATP, annealing does not.</text>
</comment>
<comment type="cofactor">
    <cofactor evidence="1">
        <name>Mg(2+)</name>
        <dbReference type="ChEBI" id="CHEBI:18420"/>
    </cofactor>
    <cofactor evidence="1">
        <name>Mn(2+)</name>
        <dbReference type="ChEBI" id="CHEBI:29035"/>
    </cofactor>
</comment>
<comment type="domain">
    <text>Proteins of this family have an N-terminal nuclease domain and a C-terminal helicase/ATPase domain. In some CRISPR/Cas systems the domains are swapped, in others they are encoded separately.</text>
</comment>
<comment type="similarity">
    <text evidence="7">In the N-terminal section; belongs to the CRISPR-associated nuclease Cas3-HD family.</text>
</comment>
<comment type="similarity">
    <text evidence="7">In the central section; belongs to the CRISPR-associated helicase Cas3 family.</text>
</comment>
<accession>O27158</accession>
<dbReference type="EC" id="3.1.-.-"/>
<dbReference type="EC" id="3.6.4.-"/>
<dbReference type="EMBL" id="AE000666">
    <property type="protein sequence ID" value="AAB85575.1"/>
    <property type="molecule type" value="Genomic_DNA"/>
</dbReference>
<dbReference type="PIR" id="C69011">
    <property type="entry name" value="C69011"/>
</dbReference>
<dbReference type="STRING" id="187420.MTH_1086"/>
<dbReference type="PaxDb" id="187420-MTH_1086"/>
<dbReference type="EnsemblBacteria" id="AAB85575">
    <property type="protein sequence ID" value="AAB85575"/>
    <property type="gene ID" value="MTH_1086"/>
</dbReference>
<dbReference type="KEGG" id="mth:MTH_1086"/>
<dbReference type="PATRIC" id="fig|187420.15.peg.1064"/>
<dbReference type="HOGENOM" id="CLU_009347_0_0_2"/>
<dbReference type="InParanoid" id="O27158"/>
<dbReference type="Proteomes" id="UP000005223">
    <property type="component" value="Chromosome"/>
</dbReference>
<dbReference type="GO" id="GO:0005524">
    <property type="term" value="F:ATP binding"/>
    <property type="evidence" value="ECO:0007669"/>
    <property type="project" value="UniProtKB-KW"/>
</dbReference>
<dbReference type="GO" id="GO:0140097">
    <property type="term" value="F:catalytic activity, acting on DNA"/>
    <property type="evidence" value="ECO:0007669"/>
    <property type="project" value="UniProtKB-ARBA"/>
</dbReference>
<dbReference type="GO" id="GO:0004386">
    <property type="term" value="F:helicase activity"/>
    <property type="evidence" value="ECO:0007669"/>
    <property type="project" value="UniProtKB-KW"/>
</dbReference>
<dbReference type="GO" id="GO:0046872">
    <property type="term" value="F:metal ion binding"/>
    <property type="evidence" value="ECO:0007669"/>
    <property type="project" value="UniProtKB-KW"/>
</dbReference>
<dbReference type="GO" id="GO:0004518">
    <property type="term" value="F:nuclease activity"/>
    <property type="evidence" value="ECO:0007669"/>
    <property type="project" value="UniProtKB-KW"/>
</dbReference>
<dbReference type="GO" id="GO:0003676">
    <property type="term" value="F:nucleic acid binding"/>
    <property type="evidence" value="ECO:0007669"/>
    <property type="project" value="InterPro"/>
</dbReference>
<dbReference type="GO" id="GO:0051607">
    <property type="term" value="P:defense response to virus"/>
    <property type="evidence" value="ECO:0007669"/>
    <property type="project" value="UniProtKB-KW"/>
</dbReference>
<dbReference type="CDD" id="cd09641">
    <property type="entry name" value="Cas3''_I"/>
    <property type="match status" value="1"/>
</dbReference>
<dbReference type="Gene3D" id="1.10.3210.30">
    <property type="match status" value="1"/>
</dbReference>
<dbReference type="Gene3D" id="3.40.50.300">
    <property type="entry name" value="P-loop containing nucleotide triphosphate hydrolases"/>
    <property type="match status" value="2"/>
</dbReference>
<dbReference type="InterPro" id="IPR054712">
    <property type="entry name" value="Cas3-like_dom"/>
</dbReference>
<dbReference type="InterPro" id="IPR006483">
    <property type="entry name" value="CRISPR-assoc_Cas3_HD"/>
</dbReference>
<dbReference type="InterPro" id="IPR038257">
    <property type="entry name" value="CRISPR-assoc_Cas3_HD_sf"/>
</dbReference>
<dbReference type="InterPro" id="IPR011545">
    <property type="entry name" value="DEAD/DEAH_box_helicase_dom"/>
</dbReference>
<dbReference type="InterPro" id="IPR014001">
    <property type="entry name" value="Helicase_ATP-bd"/>
</dbReference>
<dbReference type="InterPro" id="IPR006474">
    <property type="entry name" value="Helicase_Cas3_CRISPR-ass_core"/>
</dbReference>
<dbReference type="InterPro" id="IPR027417">
    <property type="entry name" value="P-loop_NTPase"/>
</dbReference>
<dbReference type="NCBIfam" id="TIGR01587">
    <property type="entry name" value="cas3_core"/>
    <property type="match status" value="1"/>
</dbReference>
<dbReference type="NCBIfam" id="TIGR01596">
    <property type="entry name" value="cas3_HD"/>
    <property type="match status" value="1"/>
</dbReference>
<dbReference type="Pfam" id="PF22590">
    <property type="entry name" value="Cas3-like_C_2"/>
    <property type="match status" value="1"/>
</dbReference>
<dbReference type="Pfam" id="PF18019">
    <property type="entry name" value="Cas3_HD"/>
    <property type="match status" value="1"/>
</dbReference>
<dbReference type="Pfam" id="PF00270">
    <property type="entry name" value="DEAD"/>
    <property type="match status" value="1"/>
</dbReference>
<dbReference type="SMART" id="SM00487">
    <property type="entry name" value="DEXDc"/>
    <property type="match status" value="1"/>
</dbReference>
<dbReference type="SUPFAM" id="SSF52540">
    <property type="entry name" value="P-loop containing nucleoside triphosphate hydrolases"/>
    <property type="match status" value="1"/>
</dbReference>
<dbReference type="PROSITE" id="PS51643">
    <property type="entry name" value="HD_CAS3"/>
    <property type="match status" value="1"/>
</dbReference>
<dbReference type="PROSITE" id="PS51192">
    <property type="entry name" value="HELICASE_ATP_BIND_1"/>
    <property type="match status" value="1"/>
</dbReference>
<dbReference type="PROSITE" id="PS51194">
    <property type="entry name" value="HELICASE_CTER"/>
    <property type="match status" value="1"/>
</dbReference>
<organism>
    <name type="scientific">Methanothermobacter thermautotrophicus (strain ATCC 29096 / DSM 1053 / JCM 10044 / NBRC 100330 / Delta H)</name>
    <name type="common">Methanobacterium thermoautotrophicum</name>
    <dbReference type="NCBI Taxonomy" id="187420"/>
    <lineage>
        <taxon>Archaea</taxon>
        <taxon>Methanobacteriati</taxon>
        <taxon>Methanobacteriota</taxon>
        <taxon>Methanomada group</taxon>
        <taxon>Methanobacteria</taxon>
        <taxon>Methanobacteriales</taxon>
        <taxon>Methanobacteriaceae</taxon>
        <taxon>Methanothermobacter</taxon>
    </lineage>
</organism>
<name>CAS3_METTH</name>
<keyword id="KW-0051">Antiviral defense</keyword>
<keyword id="KW-0067">ATP-binding</keyword>
<keyword id="KW-0347">Helicase</keyword>
<keyword id="KW-0378">Hydrolase</keyword>
<keyword id="KW-0460">Magnesium</keyword>
<keyword id="KW-0479">Metal-binding</keyword>
<keyword id="KW-0540">Nuclease</keyword>
<keyword id="KW-0547">Nucleotide-binding</keyword>
<keyword id="KW-1185">Reference proteome</keyword>
<gene>
    <name type="primary">cas3</name>
    <name type="ordered locus">MTH_1086</name>
</gene>